<protein>
    <recommendedName>
        <fullName evidence="1">Heat-inducible transcription repressor HrcA</fullName>
    </recommendedName>
</protein>
<comment type="function">
    <text evidence="1">Negative regulator of class I heat shock genes (grpE-dnaK-dnaJ and groELS operons). Prevents heat-shock induction of these operons.</text>
</comment>
<comment type="similarity">
    <text evidence="1">Belongs to the HrcA family.</text>
</comment>
<accession>Q892Q8</accession>
<keyword id="KW-1185">Reference proteome</keyword>
<keyword id="KW-0678">Repressor</keyword>
<keyword id="KW-0346">Stress response</keyword>
<keyword id="KW-0804">Transcription</keyword>
<keyword id="KW-0805">Transcription regulation</keyword>
<gene>
    <name evidence="1" type="primary">hrcA</name>
    <name type="ordered locus">CTC_02033</name>
</gene>
<evidence type="ECO:0000255" key="1">
    <source>
        <dbReference type="HAMAP-Rule" id="MF_00081"/>
    </source>
</evidence>
<proteinExistence type="inferred from homology"/>
<dbReference type="EMBL" id="AE015927">
    <property type="protein sequence ID" value="AAO36536.1"/>
    <property type="molecule type" value="Genomic_DNA"/>
</dbReference>
<dbReference type="SMR" id="Q892Q8"/>
<dbReference type="STRING" id="212717.CTC_02033"/>
<dbReference type="KEGG" id="ctc:CTC_02033"/>
<dbReference type="HOGENOM" id="CLU_050019_1_0_9"/>
<dbReference type="Proteomes" id="UP000001412">
    <property type="component" value="Chromosome"/>
</dbReference>
<dbReference type="GO" id="GO:0003677">
    <property type="term" value="F:DNA binding"/>
    <property type="evidence" value="ECO:0007669"/>
    <property type="project" value="InterPro"/>
</dbReference>
<dbReference type="GO" id="GO:0045892">
    <property type="term" value="P:negative regulation of DNA-templated transcription"/>
    <property type="evidence" value="ECO:0007669"/>
    <property type="project" value="UniProtKB-UniRule"/>
</dbReference>
<dbReference type="FunFam" id="1.10.10.10:FF:000049">
    <property type="entry name" value="Heat-inducible transcription repressor HrcA"/>
    <property type="match status" value="1"/>
</dbReference>
<dbReference type="Gene3D" id="3.30.450.40">
    <property type="match status" value="1"/>
</dbReference>
<dbReference type="Gene3D" id="3.30.390.60">
    <property type="entry name" value="Heat-inducible transcription repressor hrca homolog, domain 3"/>
    <property type="match status" value="1"/>
</dbReference>
<dbReference type="Gene3D" id="1.10.10.10">
    <property type="entry name" value="Winged helix-like DNA-binding domain superfamily/Winged helix DNA-binding domain"/>
    <property type="match status" value="1"/>
</dbReference>
<dbReference type="HAMAP" id="MF_00081">
    <property type="entry name" value="HrcA"/>
    <property type="match status" value="1"/>
</dbReference>
<dbReference type="InterPro" id="IPR029016">
    <property type="entry name" value="GAF-like_dom_sf"/>
</dbReference>
<dbReference type="InterPro" id="IPR002571">
    <property type="entry name" value="HrcA"/>
</dbReference>
<dbReference type="InterPro" id="IPR021153">
    <property type="entry name" value="HrcA_C"/>
</dbReference>
<dbReference type="InterPro" id="IPR036388">
    <property type="entry name" value="WH-like_DNA-bd_sf"/>
</dbReference>
<dbReference type="InterPro" id="IPR036390">
    <property type="entry name" value="WH_DNA-bd_sf"/>
</dbReference>
<dbReference type="InterPro" id="IPR023120">
    <property type="entry name" value="WHTH_transcript_rep_HrcA_IDD"/>
</dbReference>
<dbReference type="NCBIfam" id="TIGR00331">
    <property type="entry name" value="hrcA"/>
    <property type="match status" value="1"/>
</dbReference>
<dbReference type="PANTHER" id="PTHR34824">
    <property type="entry name" value="HEAT-INDUCIBLE TRANSCRIPTION REPRESSOR HRCA"/>
    <property type="match status" value="1"/>
</dbReference>
<dbReference type="PANTHER" id="PTHR34824:SF1">
    <property type="entry name" value="HEAT-INDUCIBLE TRANSCRIPTION REPRESSOR HRCA"/>
    <property type="match status" value="1"/>
</dbReference>
<dbReference type="Pfam" id="PF01628">
    <property type="entry name" value="HrcA"/>
    <property type="match status" value="1"/>
</dbReference>
<dbReference type="PIRSF" id="PIRSF005485">
    <property type="entry name" value="HrcA"/>
    <property type="match status" value="1"/>
</dbReference>
<dbReference type="SUPFAM" id="SSF55781">
    <property type="entry name" value="GAF domain-like"/>
    <property type="match status" value="1"/>
</dbReference>
<dbReference type="SUPFAM" id="SSF46785">
    <property type="entry name" value="Winged helix' DNA-binding domain"/>
    <property type="match status" value="1"/>
</dbReference>
<reference key="1">
    <citation type="journal article" date="2003" name="Proc. Natl. Acad. Sci. U.S.A.">
        <title>The genome sequence of Clostridium tetani, the causative agent of tetanus disease.</title>
        <authorList>
            <person name="Brueggemann H."/>
            <person name="Baeumer S."/>
            <person name="Fricke W.F."/>
            <person name="Wiezer A."/>
            <person name="Liesegang H."/>
            <person name="Decker I."/>
            <person name="Herzberg C."/>
            <person name="Martinez-Arias R."/>
            <person name="Merkl R."/>
            <person name="Henne A."/>
            <person name="Gottschalk G."/>
        </authorList>
    </citation>
    <scope>NUCLEOTIDE SEQUENCE [LARGE SCALE GENOMIC DNA]</scope>
    <source>
        <strain>Massachusetts / E88</strain>
    </source>
</reference>
<organism>
    <name type="scientific">Clostridium tetani (strain Massachusetts / E88)</name>
    <dbReference type="NCBI Taxonomy" id="212717"/>
    <lineage>
        <taxon>Bacteria</taxon>
        <taxon>Bacillati</taxon>
        <taxon>Bacillota</taxon>
        <taxon>Clostridia</taxon>
        <taxon>Eubacteriales</taxon>
        <taxon>Clostridiaceae</taxon>
        <taxon>Clostridium</taxon>
    </lineage>
</organism>
<feature type="chain" id="PRO_0000182473" description="Heat-inducible transcription repressor HrcA">
    <location>
        <begin position="1"/>
        <end position="351"/>
    </location>
</feature>
<sequence>MLINGVIIMEMDKRKIKILQAIIHDYIQTAEPVGSRTIAKKYDLGVSSATIRNEMSDLEDMGYLEQLHSSSGRKPSDKGYRLYVDKLMNIQKLSSMEECAIKTHIINSALYEIEKVVREASAILADLTKLTTVVMSPSSIESYIKSIQLIGLDANTVLLVLVIDTGIIKNNVIKLHAKMTIDELVKINRILNIKLNKIRVESINLDFLKVVLEEFKDYEKWLKDILPVLYETLLSGIDSNEIYLEGATNIFNYPEYNDIQRAKDFLSLIDDKDKVKNLIKSDDNITIKIGKENFIEDAKDCTIITAVYKLKDRPLGTIGVIGPTRMPYSRVVSILSTLVDELDKLLKDDNI</sequence>
<name>HRCA_CLOTE</name>